<protein>
    <recommendedName>
        <fullName evidence="1">7-methyl-GTP pyrophosphatase</fullName>
        <shortName evidence="1">m(7)GTP pyrophosphatase</shortName>
        <ecNumber evidence="1">3.6.1.-</ecNumber>
    </recommendedName>
</protein>
<comment type="function">
    <text evidence="1">Nucleoside triphosphate pyrophosphatase that hydrolyzes 7-methyl-GTP (m(7)GTP). May have a dual role in cell division arrest and in preventing the incorporation of modified nucleotides into cellular nucleic acids.</text>
</comment>
<comment type="catalytic activity">
    <reaction evidence="1">
        <text>N(7)-methyl-GTP + H2O = N(7)-methyl-GMP + diphosphate + H(+)</text>
        <dbReference type="Rhea" id="RHEA:58744"/>
        <dbReference type="ChEBI" id="CHEBI:15377"/>
        <dbReference type="ChEBI" id="CHEBI:15378"/>
        <dbReference type="ChEBI" id="CHEBI:33019"/>
        <dbReference type="ChEBI" id="CHEBI:58285"/>
        <dbReference type="ChEBI" id="CHEBI:87133"/>
    </reaction>
</comment>
<comment type="cofactor">
    <cofactor evidence="1">
        <name>a divalent metal cation</name>
        <dbReference type="ChEBI" id="CHEBI:60240"/>
    </cofactor>
</comment>
<comment type="subcellular location">
    <subcellularLocation>
        <location evidence="1">Cytoplasm</location>
    </subcellularLocation>
</comment>
<comment type="similarity">
    <text evidence="1">Belongs to the Maf family. YceF subfamily.</text>
</comment>
<sequence>MPDTVCRPPRLILASSSRYRRALLERLGIPFDVVSPDLDETPLAGETPAATALRLAGAKARAVAATIDAPDGVLVIGSDQVATFDGHQIGKPGTHERALAQLVSMQGREVEFHSALCLYDSRTDNAQVEDIVTHVRFRSLPEAELDAYLRAETPYDVAGSAKSEGLGIALLDAIDSDDPTALVGLPLIALTRMLRAADYPLFATTRGDRA</sequence>
<name>NTPPB_BURO1</name>
<evidence type="ECO:0000255" key="1">
    <source>
        <dbReference type="HAMAP-Rule" id="MF_00528"/>
    </source>
</evidence>
<organism>
    <name type="scientific">Burkholderia orbicola (strain AU 1054)</name>
    <dbReference type="NCBI Taxonomy" id="331271"/>
    <lineage>
        <taxon>Bacteria</taxon>
        <taxon>Pseudomonadati</taxon>
        <taxon>Pseudomonadota</taxon>
        <taxon>Betaproteobacteria</taxon>
        <taxon>Burkholderiales</taxon>
        <taxon>Burkholderiaceae</taxon>
        <taxon>Burkholderia</taxon>
        <taxon>Burkholderia cepacia complex</taxon>
        <taxon>Burkholderia orbicola</taxon>
    </lineage>
</organism>
<feature type="chain" id="PRO_0000267263" description="7-methyl-GTP pyrophosphatase">
    <location>
        <begin position="1"/>
        <end position="210"/>
    </location>
</feature>
<feature type="active site" description="Proton acceptor" evidence="1">
    <location>
        <position position="79"/>
    </location>
</feature>
<feature type="site" description="Important for substrate specificity" evidence="1">
    <location>
        <position position="19"/>
    </location>
</feature>
<feature type="site" description="Important for substrate specificity" evidence="1">
    <location>
        <position position="80"/>
    </location>
</feature>
<feature type="site" description="Important for substrate specificity" evidence="1">
    <location>
        <position position="164"/>
    </location>
</feature>
<reference key="1">
    <citation type="submission" date="2006-05" db="EMBL/GenBank/DDBJ databases">
        <title>Complete sequence of chromosome 1 of Burkholderia cenocepacia AU 1054.</title>
        <authorList>
            <consortium name="US DOE Joint Genome Institute"/>
            <person name="Copeland A."/>
            <person name="Lucas S."/>
            <person name="Lapidus A."/>
            <person name="Barry K."/>
            <person name="Detter J.C."/>
            <person name="Glavina del Rio T."/>
            <person name="Hammon N."/>
            <person name="Israni S."/>
            <person name="Dalin E."/>
            <person name="Tice H."/>
            <person name="Pitluck S."/>
            <person name="Chain P."/>
            <person name="Malfatti S."/>
            <person name="Shin M."/>
            <person name="Vergez L."/>
            <person name="Schmutz J."/>
            <person name="Larimer F."/>
            <person name="Land M."/>
            <person name="Hauser L."/>
            <person name="Kyrpides N."/>
            <person name="Lykidis A."/>
            <person name="LiPuma J.J."/>
            <person name="Konstantinidis K."/>
            <person name="Tiedje J.M."/>
            <person name="Richardson P."/>
        </authorList>
    </citation>
    <scope>NUCLEOTIDE SEQUENCE [LARGE SCALE GENOMIC DNA]</scope>
    <source>
        <strain>AU 1054</strain>
    </source>
</reference>
<proteinExistence type="inferred from homology"/>
<dbReference type="EC" id="3.6.1.-" evidence="1"/>
<dbReference type="EMBL" id="CP000378">
    <property type="protein sequence ID" value="ABF75547.1"/>
    <property type="molecule type" value="Genomic_DNA"/>
</dbReference>
<dbReference type="SMR" id="Q1BXV8"/>
<dbReference type="HOGENOM" id="CLU_040416_1_0_4"/>
<dbReference type="GO" id="GO:0005737">
    <property type="term" value="C:cytoplasm"/>
    <property type="evidence" value="ECO:0007669"/>
    <property type="project" value="UniProtKB-SubCell"/>
</dbReference>
<dbReference type="GO" id="GO:0047429">
    <property type="term" value="F:nucleoside triphosphate diphosphatase activity"/>
    <property type="evidence" value="ECO:0007669"/>
    <property type="project" value="InterPro"/>
</dbReference>
<dbReference type="GO" id="GO:0009117">
    <property type="term" value="P:nucleotide metabolic process"/>
    <property type="evidence" value="ECO:0007669"/>
    <property type="project" value="UniProtKB-KW"/>
</dbReference>
<dbReference type="CDD" id="cd00555">
    <property type="entry name" value="Maf"/>
    <property type="match status" value="1"/>
</dbReference>
<dbReference type="Gene3D" id="3.90.950.10">
    <property type="match status" value="1"/>
</dbReference>
<dbReference type="HAMAP" id="MF_00528">
    <property type="entry name" value="Maf"/>
    <property type="match status" value="1"/>
</dbReference>
<dbReference type="InterPro" id="IPR029001">
    <property type="entry name" value="ITPase-like_fam"/>
</dbReference>
<dbReference type="InterPro" id="IPR003697">
    <property type="entry name" value="Maf-like"/>
</dbReference>
<dbReference type="NCBIfam" id="TIGR00172">
    <property type="entry name" value="maf"/>
    <property type="match status" value="1"/>
</dbReference>
<dbReference type="PANTHER" id="PTHR43213">
    <property type="entry name" value="BIFUNCTIONAL DTTP/UTP PYROPHOSPHATASE/METHYLTRANSFERASE PROTEIN-RELATED"/>
    <property type="match status" value="1"/>
</dbReference>
<dbReference type="PANTHER" id="PTHR43213:SF5">
    <property type="entry name" value="BIFUNCTIONAL DTTP_UTP PYROPHOSPHATASE_METHYLTRANSFERASE PROTEIN-RELATED"/>
    <property type="match status" value="1"/>
</dbReference>
<dbReference type="Pfam" id="PF02545">
    <property type="entry name" value="Maf"/>
    <property type="match status" value="1"/>
</dbReference>
<dbReference type="PIRSF" id="PIRSF006305">
    <property type="entry name" value="Maf"/>
    <property type="match status" value="1"/>
</dbReference>
<dbReference type="SUPFAM" id="SSF52972">
    <property type="entry name" value="ITPase-like"/>
    <property type="match status" value="1"/>
</dbReference>
<accession>Q1BXV8</accession>
<keyword id="KW-0963">Cytoplasm</keyword>
<keyword id="KW-0378">Hydrolase</keyword>
<keyword id="KW-0546">Nucleotide metabolism</keyword>
<gene>
    <name type="ordered locus">Bcen_0637</name>
</gene>